<accession>B8E7U7</accession>
<name>Y2933_SHEB2</name>
<gene>
    <name type="ordered locus">Sbal223_2933</name>
</gene>
<organism>
    <name type="scientific">Shewanella baltica (strain OS223)</name>
    <dbReference type="NCBI Taxonomy" id="407976"/>
    <lineage>
        <taxon>Bacteria</taxon>
        <taxon>Pseudomonadati</taxon>
        <taxon>Pseudomonadota</taxon>
        <taxon>Gammaproteobacteria</taxon>
        <taxon>Alteromonadales</taxon>
        <taxon>Shewanellaceae</taxon>
        <taxon>Shewanella</taxon>
    </lineage>
</organism>
<reference key="1">
    <citation type="submission" date="2008-12" db="EMBL/GenBank/DDBJ databases">
        <title>Complete sequence of chromosome of Shewanella baltica OS223.</title>
        <authorList>
            <consortium name="US DOE Joint Genome Institute"/>
            <person name="Lucas S."/>
            <person name="Copeland A."/>
            <person name="Lapidus A."/>
            <person name="Glavina del Rio T."/>
            <person name="Dalin E."/>
            <person name="Tice H."/>
            <person name="Bruce D."/>
            <person name="Goodwin L."/>
            <person name="Pitluck S."/>
            <person name="Chertkov O."/>
            <person name="Meincke L."/>
            <person name="Brettin T."/>
            <person name="Detter J.C."/>
            <person name="Han C."/>
            <person name="Kuske C.R."/>
            <person name="Larimer F."/>
            <person name="Land M."/>
            <person name="Hauser L."/>
            <person name="Kyrpides N."/>
            <person name="Ovchinnikova G."/>
            <person name="Brettar I."/>
            <person name="Rodrigues J."/>
            <person name="Konstantinidis K."/>
            <person name="Tiedje J."/>
        </authorList>
    </citation>
    <scope>NUCLEOTIDE SEQUENCE [LARGE SCALE GENOMIC DNA]</scope>
    <source>
        <strain>OS223</strain>
    </source>
</reference>
<feature type="chain" id="PRO_1000166690" description="UPF0391 membrane protein Sbal223_2933">
    <location>
        <begin position="1"/>
        <end position="58"/>
    </location>
</feature>
<feature type="transmembrane region" description="Helical" evidence="1">
    <location>
        <begin position="6"/>
        <end position="26"/>
    </location>
</feature>
<feature type="transmembrane region" description="Helical" evidence="1">
    <location>
        <begin position="28"/>
        <end position="48"/>
    </location>
</feature>
<keyword id="KW-1003">Cell membrane</keyword>
<keyword id="KW-0472">Membrane</keyword>
<keyword id="KW-0812">Transmembrane</keyword>
<keyword id="KW-1133">Transmembrane helix</keyword>
<protein>
    <recommendedName>
        <fullName evidence="1">UPF0391 membrane protein Sbal223_2933</fullName>
    </recommendedName>
</protein>
<comment type="subcellular location">
    <subcellularLocation>
        <location evidence="1">Cell membrane</location>
        <topology evidence="1">Multi-pass membrane protein</topology>
    </subcellularLocation>
</comment>
<comment type="similarity">
    <text evidence="1">Belongs to the UPF0391 family.</text>
</comment>
<dbReference type="EMBL" id="CP001252">
    <property type="protein sequence ID" value="ACK47419.1"/>
    <property type="molecule type" value="Genomic_DNA"/>
</dbReference>
<dbReference type="RefSeq" id="WP_011846326.1">
    <property type="nucleotide sequence ID" value="NC_011663.1"/>
</dbReference>
<dbReference type="KEGG" id="sbp:Sbal223_2933"/>
<dbReference type="HOGENOM" id="CLU_187346_1_0_6"/>
<dbReference type="Proteomes" id="UP000002507">
    <property type="component" value="Chromosome"/>
</dbReference>
<dbReference type="GO" id="GO:0005886">
    <property type="term" value="C:plasma membrane"/>
    <property type="evidence" value="ECO:0007669"/>
    <property type="project" value="UniProtKB-SubCell"/>
</dbReference>
<dbReference type="HAMAP" id="MF_01361">
    <property type="entry name" value="UPF0391"/>
    <property type="match status" value="1"/>
</dbReference>
<dbReference type="InterPro" id="IPR009760">
    <property type="entry name" value="DUF1328"/>
</dbReference>
<dbReference type="NCBIfam" id="NF010228">
    <property type="entry name" value="PRK13682.1-3"/>
    <property type="match status" value="1"/>
</dbReference>
<dbReference type="NCBIfam" id="NF010229">
    <property type="entry name" value="PRK13682.1-4"/>
    <property type="match status" value="1"/>
</dbReference>
<dbReference type="Pfam" id="PF07043">
    <property type="entry name" value="DUF1328"/>
    <property type="match status" value="1"/>
</dbReference>
<dbReference type="PIRSF" id="PIRSF036466">
    <property type="entry name" value="UCP036466"/>
    <property type="match status" value="1"/>
</dbReference>
<proteinExistence type="inferred from homology"/>
<sequence length="58" mass="6040">MLGWTLVFLVVAVIAGLLGFTGIAGAAAGIAKIIFLIFIVLLVISLLVNAFRGKSPRL</sequence>
<evidence type="ECO:0000255" key="1">
    <source>
        <dbReference type="HAMAP-Rule" id="MF_01361"/>
    </source>
</evidence>